<sequence>MDDLLNSVSFSNASNPHNAWGSENISNSNSAIPSITNDVSFSMEASVWKENALNLDTFNLKDINEKLDYTFGVVKPPKRISLASKDYIGITATSETNFRQLIRLGYNEKSLGELKQGTISRLLKEHMTLWNQERSNVNRKSNVLFCWSTAYQKQKRKTASYTNSPVTPPINDKNILLPEQSPLSNFSTTKISSINVPSDILDFSNLSSNEIPKDYSSSTALLNNTVAVKQDHKLSANTFLSSPVKLIERESNSCSTISINKEDEVVPKSPLSLDRKKVDEVEEHSSIAKLDSEEKIRETKKKNSSTSLSPDPTSDNFEWGSWVSSQDTSKNSSNLASASVDDVSEESQVEPNTLIFQNFSSPSTSLSAPKDTPAVIQSINTSFLNNERAGRGNIKTVDQNQLINRIVDKLPDLSYLVD</sequence>
<reference key="1">
    <citation type="journal article" date="2002" name="Nature">
        <title>The genome sequence of Schizosaccharomyces pombe.</title>
        <authorList>
            <person name="Wood V."/>
            <person name="Gwilliam R."/>
            <person name="Rajandream M.A."/>
            <person name="Lyne M.H."/>
            <person name="Lyne R."/>
            <person name="Stewart A."/>
            <person name="Sgouros J.G."/>
            <person name="Peat N."/>
            <person name="Hayles J."/>
            <person name="Baker S.G."/>
            <person name="Basham D."/>
            <person name="Bowman S."/>
            <person name="Brooks K."/>
            <person name="Brown D."/>
            <person name="Brown S."/>
            <person name="Chillingworth T."/>
            <person name="Churcher C.M."/>
            <person name="Collins M."/>
            <person name="Connor R."/>
            <person name="Cronin A."/>
            <person name="Davis P."/>
            <person name="Feltwell T."/>
            <person name="Fraser A."/>
            <person name="Gentles S."/>
            <person name="Goble A."/>
            <person name="Hamlin N."/>
            <person name="Harris D.E."/>
            <person name="Hidalgo J."/>
            <person name="Hodgson G."/>
            <person name="Holroyd S."/>
            <person name="Hornsby T."/>
            <person name="Howarth S."/>
            <person name="Huckle E.J."/>
            <person name="Hunt S."/>
            <person name="Jagels K."/>
            <person name="James K.D."/>
            <person name="Jones L."/>
            <person name="Jones M."/>
            <person name="Leather S."/>
            <person name="McDonald S."/>
            <person name="McLean J."/>
            <person name="Mooney P."/>
            <person name="Moule S."/>
            <person name="Mungall K.L."/>
            <person name="Murphy L.D."/>
            <person name="Niblett D."/>
            <person name="Odell C."/>
            <person name="Oliver K."/>
            <person name="O'Neil S."/>
            <person name="Pearson D."/>
            <person name="Quail M.A."/>
            <person name="Rabbinowitsch E."/>
            <person name="Rutherford K.M."/>
            <person name="Rutter S."/>
            <person name="Saunders D."/>
            <person name="Seeger K."/>
            <person name="Sharp S."/>
            <person name="Skelton J."/>
            <person name="Simmonds M.N."/>
            <person name="Squares R."/>
            <person name="Squares S."/>
            <person name="Stevens K."/>
            <person name="Taylor K."/>
            <person name="Taylor R.G."/>
            <person name="Tivey A."/>
            <person name="Walsh S.V."/>
            <person name="Warren T."/>
            <person name="Whitehead S."/>
            <person name="Woodward J.R."/>
            <person name="Volckaert G."/>
            <person name="Aert R."/>
            <person name="Robben J."/>
            <person name="Grymonprez B."/>
            <person name="Weltjens I."/>
            <person name="Vanstreels E."/>
            <person name="Rieger M."/>
            <person name="Schaefer M."/>
            <person name="Mueller-Auer S."/>
            <person name="Gabel C."/>
            <person name="Fuchs M."/>
            <person name="Duesterhoeft A."/>
            <person name="Fritzc C."/>
            <person name="Holzer E."/>
            <person name="Moestl D."/>
            <person name="Hilbert H."/>
            <person name="Borzym K."/>
            <person name="Langer I."/>
            <person name="Beck A."/>
            <person name="Lehrach H."/>
            <person name="Reinhardt R."/>
            <person name="Pohl T.M."/>
            <person name="Eger P."/>
            <person name="Zimmermann W."/>
            <person name="Wedler H."/>
            <person name="Wambutt R."/>
            <person name="Purnelle B."/>
            <person name="Goffeau A."/>
            <person name="Cadieu E."/>
            <person name="Dreano S."/>
            <person name="Gloux S."/>
            <person name="Lelaure V."/>
            <person name="Mottier S."/>
            <person name="Galibert F."/>
            <person name="Aves S.J."/>
            <person name="Xiang Z."/>
            <person name="Hunt C."/>
            <person name="Moore K."/>
            <person name="Hurst S.M."/>
            <person name="Lucas M."/>
            <person name="Rochet M."/>
            <person name="Gaillardin C."/>
            <person name="Tallada V.A."/>
            <person name="Garzon A."/>
            <person name="Thode G."/>
            <person name="Daga R.R."/>
            <person name="Cruzado L."/>
            <person name="Jimenez J."/>
            <person name="Sanchez M."/>
            <person name="del Rey F."/>
            <person name="Benito J."/>
            <person name="Dominguez A."/>
            <person name="Revuelta J.L."/>
            <person name="Moreno S."/>
            <person name="Armstrong J."/>
            <person name="Forsburg S.L."/>
            <person name="Cerutti L."/>
            <person name="Lowe T."/>
            <person name="McCombie W.R."/>
            <person name="Paulsen I."/>
            <person name="Potashkin J."/>
            <person name="Shpakovski G.V."/>
            <person name="Ussery D."/>
            <person name="Barrell B.G."/>
            <person name="Nurse P."/>
        </authorList>
    </citation>
    <scope>NUCLEOTIDE SEQUENCE [LARGE SCALE GENOMIC DNA]</scope>
    <source>
        <strain>972 / ATCC 24843</strain>
    </source>
</reference>
<proteinExistence type="predicted"/>
<gene>
    <name type="ORF">SPAC9G1.07</name>
</gene>
<dbReference type="EMBL" id="CU329670">
    <property type="protein sequence ID" value="CAB11491.1"/>
    <property type="molecule type" value="Genomic_DNA"/>
</dbReference>
<dbReference type="PIR" id="T39230">
    <property type="entry name" value="T39230"/>
</dbReference>
<dbReference type="RefSeq" id="NP_593562.1">
    <property type="nucleotide sequence ID" value="NM_001018995.2"/>
</dbReference>
<dbReference type="BioGRID" id="279209">
    <property type="interactions" value="46"/>
</dbReference>
<dbReference type="STRING" id="284812.O14303"/>
<dbReference type="iPTMnet" id="O14303"/>
<dbReference type="PaxDb" id="4896-SPAC9G1.07.1"/>
<dbReference type="EnsemblFungi" id="SPAC9G1.07.1">
    <property type="protein sequence ID" value="SPAC9G1.07.1:pep"/>
    <property type="gene ID" value="SPAC9G1.07"/>
</dbReference>
<dbReference type="PomBase" id="SPAC9G1.07"/>
<dbReference type="VEuPathDB" id="FungiDB:SPAC9G1.07"/>
<dbReference type="HOGENOM" id="CLU_657480_0_0_1"/>
<dbReference type="InParanoid" id="O14303"/>
<dbReference type="PRO" id="PR:O14303"/>
<dbReference type="Proteomes" id="UP000002485">
    <property type="component" value="Chromosome I"/>
</dbReference>
<dbReference type="GO" id="GO:0005794">
    <property type="term" value="C:Golgi apparatus"/>
    <property type="evidence" value="ECO:0007005"/>
    <property type="project" value="PomBase"/>
</dbReference>
<name>YE87_SCHPO</name>
<evidence type="ECO:0000256" key="1">
    <source>
        <dbReference type="SAM" id="MobiDB-lite"/>
    </source>
</evidence>
<feature type="chain" id="PRO_0000116706" description="Uncharacterized protein C9G1.07">
    <location>
        <begin position="1"/>
        <end position="418"/>
    </location>
</feature>
<feature type="region of interest" description="Disordered" evidence="1">
    <location>
        <begin position="282"/>
        <end position="346"/>
    </location>
</feature>
<feature type="compositionally biased region" description="Basic and acidic residues" evidence="1">
    <location>
        <begin position="282"/>
        <end position="297"/>
    </location>
</feature>
<feature type="compositionally biased region" description="Low complexity" evidence="1">
    <location>
        <begin position="304"/>
        <end position="316"/>
    </location>
</feature>
<feature type="compositionally biased region" description="Polar residues" evidence="1">
    <location>
        <begin position="322"/>
        <end position="337"/>
    </location>
</feature>
<organism>
    <name type="scientific">Schizosaccharomyces pombe (strain 972 / ATCC 24843)</name>
    <name type="common">Fission yeast</name>
    <dbReference type="NCBI Taxonomy" id="284812"/>
    <lineage>
        <taxon>Eukaryota</taxon>
        <taxon>Fungi</taxon>
        <taxon>Dikarya</taxon>
        <taxon>Ascomycota</taxon>
        <taxon>Taphrinomycotina</taxon>
        <taxon>Schizosaccharomycetes</taxon>
        <taxon>Schizosaccharomycetales</taxon>
        <taxon>Schizosaccharomycetaceae</taxon>
        <taxon>Schizosaccharomyces</taxon>
    </lineage>
</organism>
<keyword id="KW-1185">Reference proteome</keyword>
<accession>O14303</accession>
<protein>
    <recommendedName>
        <fullName>Uncharacterized protein C9G1.07</fullName>
    </recommendedName>
</protein>